<proteinExistence type="inferred from homology"/>
<reference key="1">
    <citation type="journal article" date="2009" name="BMC Genomics">
        <title>Evidence for niche adaptation in the genome of the bovine pathogen Streptococcus uberis.</title>
        <authorList>
            <person name="Ward P.N."/>
            <person name="Holden M.T.G."/>
            <person name="Leigh J.A."/>
            <person name="Lennard N."/>
            <person name="Bignell A."/>
            <person name="Barron A."/>
            <person name="Clark L."/>
            <person name="Quail M.A."/>
            <person name="Woodward J."/>
            <person name="Barrell B.G."/>
            <person name="Egan S.A."/>
            <person name="Field T.R."/>
            <person name="Maskell D."/>
            <person name="Kehoe M."/>
            <person name="Dowson C.G."/>
            <person name="Chanter N."/>
            <person name="Whatmore A.M."/>
            <person name="Bentley S.D."/>
            <person name="Parkhill J."/>
        </authorList>
    </citation>
    <scope>NUCLEOTIDE SEQUENCE [LARGE SCALE GENOMIC DNA]</scope>
    <source>
        <strain>ATCC BAA-854 / 0140J</strain>
    </source>
</reference>
<accession>B9DSL8</accession>
<keyword id="KW-0408">Iron</keyword>
<keyword id="KW-0456">Lyase</keyword>
<keyword id="KW-0464">Manganese</keyword>
<keyword id="KW-1185">Reference proteome</keyword>
<organism>
    <name type="scientific">Streptococcus uberis (strain ATCC BAA-854 / 0140J)</name>
    <dbReference type="NCBI Taxonomy" id="218495"/>
    <lineage>
        <taxon>Bacteria</taxon>
        <taxon>Bacillati</taxon>
        <taxon>Bacillota</taxon>
        <taxon>Bacilli</taxon>
        <taxon>Lactobacillales</taxon>
        <taxon>Streptococcaceae</taxon>
        <taxon>Streptococcus</taxon>
    </lineage>
</organism>
<name>UXUA_STRU0</name>
<sequence>MEMSFRWYGEDDPVTLENIRQIPTMKGIVTAIYDVPVGEVWPRERIQQLKETVEASGLKISVIESVPVHEDIKLGRPTRDVLIDNYIQTIKNLAAEGIDTICYNFMPVFDWTRTDLAYEYPDGSTALIFDEEVSKKMDPVNGELSLPGWDSSYTKEEMRAIMDAYADVDEEKLWEHLEYFIKRIIPEAEAVGVKMAIHPDDPPYSIFGLPRIITGLDSVERFVNLYDSKSNGITLCVGSYASDPKNDVLEISRRAFELNRVNFVHARNIKLGEGKSFKESAHPSEYGSIDMYEVIKLCHEFGFEGAIRPDHGRMIWGETGRPGYGLYDRALGATYLSGLYEAVVKAAK</sequence>
<evidence type="ECO:0000255" key="1">
    <source>
        <dbReference type="HAMAP-Rule" id="MF_00106"/>
    </source>
</evidence>
<comment type="function">
    <text evidence="1">Catalyzes the dehydration of D-mannonate.</text>
</comment>
<comment type="catalytic activity">
    <reaction evidence="1">
        <text>D-mannonate = 2-dehydro-3-deoxy-D-gluconate + H2O</text>
        <dbReference type="Rhea" id="RHEA:20097"/>
        <dbReference type="ChEBI" id="CHEBI:15377"/>
        <dbReference type="ChEBI" id="CHEBI:17767"/>
        <dbReference type="ChEBI" id="CHEBI:57990"/>
        <dbReference type="EC" id="4.2.1.8"/>
    </reaction>
</comment>
<comment type="cofactor">
    <cofactor evidence="1">
        <name>Fe(2+)</name>
        <dbReference type="ChEBI" id="CHEBI:29033"/>
    </cofactor>
    <cofactor evidence="1">
        <name>Mn(2+)</name>
        <dbReference type="ChEBI" id="CHEBI:29035"/>
    </cofactor>
</comment>
<comment type="pathway">
    <text evidence="1">Carbohydrate metabolism; pentose and glucuronate interconversion.</text>
</comment>
<comment type="similarity">
    <text evidence="1">Belongs to the mannonate dehydratase family.</text>
</comment>
<gene>
    <name evidence="1" type="primary">uxuA</name>
    <name type="ordered locus">SUB1202</name>
</gene>
<protein>
    <recommendedName>
        <fullName evidence="1">Mannonate dehydratase</fullName>
        <ecNumber evidence="1">4.2.1.8</ecNumber>
    </recommendedName>
    <alternativeName>
        <fullName evidence="1">D-mannonate hydro-lyase</fullName>
    </alternativeName>
</protein>
<dbReference type="EC" id="4.2.1.8" evidence="1"/>
<dbReference type="EMBL" id="AM946015">
    <property type="protein sequence ID" value="CAR42638.1"/>
    <property type="molecule type" value="Genomic_DNA"/>
</dbReference>
<dbReference type="RefSeq" id="WP_012658682.1">
    <property type="nucleotide sequence ID" value="NC_012004.1"/>
</dbReference>
<dbReference type="SMR" id="B9DSL8"/>
<dbReference type="STRING" id="218495.SUB1202"/>
<dbReference type="KEGG" id="sub:SUB1202"/>
<dbReference type="eggNOG" id="COG1312">
    <property type="taxonomic scope" value="Bacteria"/>
</dbReference>
<dbReference type="HOGENOM" id="CLU_058621_1_0_9"/>
<dbReference type="OrthoDB" id="9780250at2"/>
<dbReference type="UniPathway" id="UPA00246"/>
<dbReference type="Proteomes" id="UP000000449">
    <property type="component" value="Chromosome"/>
</dbReference>
<dbReference type="GO" id="GO:0008198">
    <property type="term" value="F:ferrous iron binding"/>
    <property type="evidence" value="ECO:0007669"/>
    <property type="project" value="TreeGrafter"/>
</dbReference>
<dbReference type="GO" id="GO:0030145">
    <property type="term" value="F:manganese ion binding"/>
    <property type="evidence" value="ECO:0007669"/>
    <property type="project" value="TreeGrafter"/>
</dbReference>
<dbReference type="GO" id="GO:0008927">
    <property type="term" value="F:mannonate dehydratase activity"/>
    <property type="evidence" value="ECO:0007669"/>
    <property type="project" value="UniProtKB-UniRule"/>
</dbReference>
<dbReference type="GO" id="GO:0042840">
    <property type="term" value="P:D-glucuronate catabolic process"/>
    <property type="evidence" value="ECO:0007669"/>
    <property type="project" value="TreeGrafter"/>
</dbReference>
<dbReference type="Gene3D" id="3.20.20.150">
    <property type="entry name" value="Divalent-metal-dependent TIM barrel enzymes"/>
    <property type="match status" value="1"/>
</dbReference>
<dbReference type="HAMAP" id="MF_00106">
    <property type="entry name" value="UxuA"/>
    <property type="match status" value="1"/>
</dbReference>
<dbReference type="InterPro" id="IPR004628">
    <property type="entry name" value="Man_deHydtase"/>
</dbReference>
<dbReference type="InterPro" id="IPR036237">
    <property type="entry name" value="Xyl_isomerase-like_sf"/>
</dbReference>
<dbReference type="NCBIfam" id="NF003027">
    <property type="entry name" value="PRK03906.1"/>
    <property type="match status" value="2"/>
</dbReference>
<dbReference type="NCBIfam" id="TIGR00695">
    <property type="entry name" value="uxuA"/>
    <property type="match status" value="1"/>
</dbReference>
<dbReference type="PANTHER" id="PTHR30387">
    <property type="entry name" value="MANNONATE DEHYDRATASE"/>
    <property type="match status" value="1"/>
</dbReference>
<dbReference type="PANTHER" id="PTHR30387:SF2">
    <property type="entry name" value="MANNONATE DEHYDRATASE"/>
    <property type="match status" value="1"/>
</dbReference>
<dbReference type="Pfam" id="PF03786">
    <property type="entry name" value="UxuA"/>
    <property type="match status" value="1"/>
</dbReference>
<dbReference type="PIRSF" id="PIRSF016049">
    <property type="entry name" value="Man_dehyd"/>
    <property type="match status" value="1"/>
</dbReference>
<dbReference type="SUPFAM" id="SSF51658">
    <property type="entry name" value="Xylose isomerase-like"/>
    <property type="match status" value="1"/>
</dbReference>
<feature type="chain" id="PRO_1000197935" description="Mannonate dehydratase">
    <location>
        <begin position="1"/>
        <end position="348"/>
    </location>
</feature>